<organism>
    <name type="scientific">Shewanella sediminis (strain HAW-EB3)</name>
    <dbReference type="NCBI Taxonomy" id="425104"/>
    <lineage>
        <taxon>Bacteria</taxon>
        <taxon>Pseudomonadati</taxon>
        <taxon>Pseudomonadota</taxon>
        <taxon>Gammaproteobacteria</taxon>
        <taxon>Alteromonadales</taxon>
        <taxon>Shewanellaceae</taxon>
        <taxon>Shewanella</taxon>
    </lineage>
</organism>
<protein>
    <recommendedName>
        <fullName evidence="1">Large ribosomal subunit protein uL4</fullName>
    </recommendedName>
    <alternativeName>
        <fullName evidence="3">50S ribosomal protein L4</fullName>
    </alternativeName>
</protein>
<sequence>MELVLKDAQSALEVSETTFGRDFNEALVHQVVVAYAANARQGTRAQKTRAEVIGSGKKPWRQKGTGRARAGTVKGPIWRGGGVTFAAKAQDHSQKVNKKMYRGALKSIFSELVRQDRLIVVESFSVEAPKTKELKAKLAEMNLEDVLIVTPEIDENLFLAARNLYKVDVRDVAGIDPVSLIAFNKVLVTADAVKQIEEMLG</sequence>
<reference key="1">
    <citation type="submission" date="2007-08" db="EMBL/GenBank/DDBJ databases">
        <title>Complete sequence of Shewanella sediminis HAW-EB3.</title>
        <authorList>
            <consortium name="US DOE Joint Genome Institute"/>
            <person name="Copeland A."/>
            <person name="Lucas S."/>
            <person name="Lapidus A."/>
            <person name="Barry K."/>
            <person name="Glavina del Rio T."/>
            <person name="Dalin E."/>
            <person name="Tice H."/>
            <person name="Pitluck S."/>
            <person name="Chertkov O."/>
            <person name="Brettin T."/>
            <person name="Bruce D."/>
            <person name="Detter J.C."/>
            <person name="Han C."/>
            <person name="Schmutz J."/>
            <person name="Larimer F."/>
            <person name="Land M."/>
            <person name="Hauser L."/>
            <person name="Kyrpides N."/>
            <person name="Kim E."/>
            <person name="Zhao J.-S."/>
            <person name="Richardson P."/>
        </authorList>
    </citation>
    <scope>NUCLEOTIDE SEQUENCE [LARGE SCALE GENOMIC DNA]</scope>
    <source>
        <strain>HAW-EB3</strain>
    </source>
</reference>
<feature type="chain" id="PRO_1000086538" description="Large ribosomal subunit protein uL4">
    <location>
        <begin position="1"/>
        <end position="201"/>
    </location>
</feature>
<feature type="region of interest" description="Disordered" evidence="2">
    <location>
        <begin position="46"/>
        <end position="71"/>
    </location>
</feature>
<accession>A8G1E7</accession>
<keyword id="KW-1185">Reference proteome</keyword>
<keyword id="KW-0687">Ribonucleoprotein</keyword>
<keyword id="KW-0689">Ribosomal protein</keyword>
<keyword id="KW-0694">RNA-binding</keyword>
<keyword id="KW-0699">rRNA-binding</keyword>
<proteinExistence type="inferred from homology"/>
<comment type="function">
    <text evidence="1">One of the primary rRNA binding proteins, this protein initially binds near the 5'-end of the 23S rRNA. It is important during the early stages of 50S assembly. It makes multiple contacts with different domains of the 23S rRNA in the assembled 50S subunit and ribosome.</text>
</comment>
<comment type="function">
    <text evidence="1">Forms part of the polypeptide exit tunnel.</text>
</comment>
<comment type="subunit">
    <text evidence="1">Part of the 50S ribosomal subunit.</text>
</comment>
<comment type="similarity">
    <text evidence="1">Belongs to the universal ribosomal protein uL4 family.</text>
</comment>
<evidence type="ECO:0000255" key="1">
    <source>
        <dbReference type="HAMAP-Rule" id="MF_01328"/>
    </source>
</evidence>
<evidence type="ECO:0000256" key="2">
    <source>
        <dbReference type="SAM" id="MobiDB-lite"/>
    </source>
</evidence>
<evidence type="ECO:0000305" key="3"/>
<dbReference type="EMBL" id="CP000821">
    <property type="protein sequence ID" value="ABV38920.1"/>
    <property type="molecule type" value="Genomic_DNA"/>
</dbReference>
<dbReference type="RefSeq" id="WP_012144648.1">
    <property type="nucleotide sequence ID" value="NC_009831.1"/>
</dbReference>
<dbReference type="SMR" id="A8G1E7"/>
<dbReference type="STRING" id="425104.Ssed_4316"/>
<dbReference type="KEGG" id="sse:Ssed_4316"/>
<dbReference type="eggNOG" id="COG0088">
    <property type="taxonomic scope" value="Bacteria"/>
</dbReference>
<dbReference type="HOGENOM" id="CLU_041575_5_2_6"/>
<dbReference type="OrthoDB" id="9803201at2"/>
<dbReference type="Proteomes" id="UP000002015">
    <property type="component" value="Chromosome"/>
</dbReference>
<dbReference type="GO" id="GO:1990904">
    <property type="term" value="C:ribonucleoprotein complex"/>
    <property type="evidence" value="ECO:0007669"/>
    <property type="project" value="UniProtKB-KW"/>
</dbReference>
<dbReference type="GO" id="GO:0005840">
    <property type="term" value="C:ribosome"/>
    <property type="evidence" value="ECO:0007669"/>
    <property type="project" value="UniProtKB-KW"/>
</dbReference>
<dbReference type="GO" id="GO:0019843">
    <property type="term" value="F:rRNA binding"/>
    <property type="evidence" value="ECO:0007669"/>
    <property type="project" value="UniProtKB-UniRule"/>
</dbReference>
<dbReference type="GO" id="GO:0003735">
    <property type="term" value="F:structural constituent of ribosome"/>
    <property type="evidence" value="ECO:0007669"/>
    <property type="project" value="InterPro"/>
</dbReference>
<dbReference type="GO" id="GO:0006412">
    <property type="term" value="P:translation"/>
    <property type="evidence" value="ECO:0007669"/>
    <property type="project" value="UniProtKB-UniRule"/>
</dbReference>
<dbReference type="FunFam" id="3.40.1370.10:FF:000001">
    <property type="entry name" value="50S ribosomal protein L4"/>
    <property type="match status" value="1"/>
</dbReference>
<dbReference type="Gene3D" id="3.40.1370.10">
    <property type="match status" value="1"/>
</dbReference>
<dbReference type="HAMAP" id="MF_01328_B">
    <property type="entry name" value="Ribosomal_uL4_B"/>
    <property type="match status" value="1"/>
</dbReference>
<dbReference type="InterPro" id="IPR002136">
    <property type="entry name" value="Ribosomal_uL4"/>
</dbReference>
<dbReference type="InterPro" id="IPR013005">
    <property type="entry name" value="Ribosomal_uL4-like"/>
</dbReference>
<dbReference type="InterPro" id="IPR023574">
    <property type="entry name" value="Ribosomal_uL4_dom_sf"/>
</dbReference>
<dbReference type="NCBIfam" id="TIGR03953">
    <property type="entry name" value="rplD_bact"/>
    <property type="match status" value="1"/>
</dbReference>
<dbReference type="PANTHER" id="PTHR10746">
    <property type="entry name" value="50S RIBOSOMAL PROTEIN L4"/>
    <property type="match status" value="1"/>
</dbReference>
<dbReference type="PANTHER" id="PTHR10746:SF6">
    <property type="entry name" value="LARGE RIBOSOMAL SUBUNIT PROTEIN UL4M"/>
    <property type="match status" value="1"/>
</dbReference>
<dbReference type="Pfam" id="PF00573">
    <property type="entry name" value="Ribosomal_L4"/>
    <property type="match status" value="1"/>
</dbReference>
<dbReference type="SUPFAM" id="SSF52166">
    <property type="entry name" value="Ribosomal protein L4"/>
    <property type="match status" value="1"/>
</dbReference>
<name>RL4_SHESH</name>
<gene>
    <name evidence="1" type="primary">rplD</name>
    <name type="ordered locus">Ssed_4316</name>
</gene>